<sequence length="253" mass="27656">MQKLIMGNWKMNGNSTSIKELCSGISQVQYDTSRVAIAVFPSSVYVKEVISQLPEKVGVGLQNITFYDDGAYTGEISARMLEDIGCDYLLIGHSERRSLFAESDEDVFKKLNKIIDTTITPVVCIGESLDDRQSGKLKQVLATQLSLILENLSVEQLAKVVIAYEPVWAIGTGVVASLEQIQETHQFIRSLLAKVDERLAKNIKIVYGGSLKAENAKDILSLPDVDGGLIGGASLKAAEFNEIINQANKICTE</sequence>
<comment type="function">
    <text evidence="1">Involved in the gluconeogenesis. Catalyzes stereospecifically the conversion of dihydroxyacetone phosphate (DHAP) to D-glyceraldehyde-3-phosphate (G3P).</text>
</comment>
<comment type="catalytic activity">
    <reaction evidence="1">
        <text>D-glyceraldehyde 3-phosphate = dihydroxyacetone phosphate</text>
        <dbReference type="Rhea" id="RHEA:18585"/>
        <dbReference type="ChEBI" id="CHEBI:57642"/>
        <dbReference type="ChEBI" id="CHEBI:59776"/>
        <dbReference type="EC" id="5.3.1.1"/>
    </reaction>
</comment>
<comment type="pathway">
    <text evidence="1">Carbohydrate biosynthesis; gluconeogenesis.</text>
</comment>
<comment type="pathway">
    <text evidence="1">Carbohydrate degradation; glycolysis; D-glyceraldehyde 3-phosphate from glycerone phosphate: step 1/1.</text>
</comment>
<comment type="subunit">
    <text evidence="1">Homodimer.</text>
</comment>
<comment type="subcellular location">
    <subcellularLocation>
        <location evidence="1">Cytoplasm</location>
    </subcellularLocation>
</comment>
<comment type="similarity">
    <text evidence="1">Belongs to the triosephosphate isomerase family.</text>
</comment>
<feature type="chain" id="PRO_0000307468" description="Triosephosphate isomerase">
    <location>
        <begin position="1"/>
        <end position="253"/>
    </location>
</feature>
<feature type="active site" description="Electrophile" evidence="1">
    <location>
        <position position="93"/>
    </location>
</feature>
<feature type="active site" description="Proton acceptor" evidence="1">
    <location>
        <position position="165"/>
    </location>
</feature>
<feature type="binding site" evidence="1">
    <location>
        <begin position="8"/>
        <end position="10"/>
    </location>
    <ligand>
        <name>substrate</name>
    </ligand>
</feature>
<feature type="binding site" evidence="1">
    <location>
        <position position="171"/>
    </location>
    <ligand>
        <name>substrate</name>
    </ligand>
</feature>
<feature type="binding site" evidence="1">
    <location>
        <position position="210"/>
    </location>
    <ligand>
        <name>substrate</name>
    </ligand>
</feature>
<feature type="binding site" evidence="1">
    <location>
        <begin position="231"/>
        <end position="232"/>
    </location>
    <ligand>
        <name>substrate</name>
    </ligand>
</feature>
<feature type="strand" evidence="2">
    <location>
        <begin position="3"/>
        <end position="8"/>
    </location>
</feature>
<feature type="helix" evidence="2">
    <location>
        <begin position="15"/>
        <end position="25"/>
    </location>
</feature>
<feature type="strand" evidence="2">
    <location>
        <begin position="34"/>
        <end position="40"/>
    </location>
</feature>
<feature type="helix" evidence="2">
    <location>
        <begin position="43"/>
        <end position="45"/>
    </location>
</feature>
<feature type="helix" evidence="2">
    <location>
        <begin position="46"/>
        <end position="51"/>
    </location>
</feature>
<feature type="strand" evidence="2">
    <location>
        <begin position="57"/>
        <end position="62"/>
    </location>
</feature>
<feature type="strand" evidence="2">
    <location>
        <begin position="65"/>
        <end position="67"/>
    </location>
</feature>
<feature type="strand" evidence="2">
    <location>
        <begin position="69"/>
        <end position="71"/>
    </location>
</feature>
<feature type="helix" evidence="2">
    <location>
        <begin position="78"/>
        <end position="83"/>
    </location>
</feature>
<feature type="strand" evidence="2">
    <location>
        <begin position="87"/>
        <end position="91"/>
    </location>
</feature>
<feature type="helix" evidence="2">
    <location>
        <begin position="94"/>
        <end position="98"/>
    </location>
</feature>
<feature type="helix" evidence="2">
    <location>
        <begin position="104"/>
        <end position="114"/>
    </location>
</feature>
<feature type="strand" evidence="2">
    <location>
        <begin position="120"/>
        <end position="125"/>
    </location>
</feature>
<feature type="helix" evidence="2">
    <location>
        <begin position="129"/>
        <end position="133"/>
    </location>
</feature>
<feature type="helix" evidence="2">
    <location>
        <begin position="137"/>
        <end position="143"/>
    </location>
</feature>
<feature type="helix" evidence="2">
    <location>
        <begin position="146"/>
        <end position="151"/>
    </location>
</feature>
<feature type="helix" evidence="2">
    <location>
        <begin position="154"/>
        <end position="159"/>
    </location>
</feature>
<feature type="strand" evidence="2">
    <location>
        <begin position="161"/>
        <end position="164"/>
    </location>
</feature>
<feature type="turn" evidence="2">
    <location>
        <begin position="167"/>
        <end position="172"/>
    </location>
</feature>
<feature type="helix" evidence="2">
    <location>
        <begin position="178"/>
        <end position="193"/>
    </location>
</feature>
<feature type="helix" evidence="2">
    <location>
        <begin position="197"/>
        <end position="200"/>
    </location>
</feature>
<feature type="strand" evidence="2">
    <location>
        <begin position="205"/>
        <end position="207"/>
    </location>
</feature>
<feature type="turn" evidence="2">
    <location>
        <begin position="217"/>
        <end position="221"/>
    </location>
</feature>
<feature type="strand" evidence="2">
    <location>
        <begin position="227"/>
        <end position="230"/>
    </location>
</feature>
<feature type="helix" evidence="2">
    <location>
        <begin position="232"/>
        <end position="235"/>
    </location>
</feature>
<feature type="helix" evidence="2">
    <location>
        <begin position="237"/>
        <end position="252"/>
    </location>
</feature>
<protein>
    <recommendedName>
        <fullName evidence="1">Triosephosphate isomerase</fullName>
        <shortName evidence="1">TIM</shortName>
        <shortName evidence="1">TPI</shortName>
        <ecNumber evidence="1">5.3.1.1</ecNumber>
    </recommendedName>
    <alternativeName>
        <fullName evidence="1">Triose-phosphate isomerase</fullName>
    </alternativeName>
</protein>
<keyword id="KW-0002">3D-structure</keyword>
<keyword id="KW-0963">Cytoplasm</keyword>
<keyword id="KW-0312">Gluconeogenesis</keyword>
<keyword id="KW-0324">Glycolysis</keyword>
<keyword id="KW-0413">Isomerase</keyword>
<keyword id="KW-1185">Reference proteome</keyword>
<evidence type="ECO:0000255" key="1">
    <source>
        <dbReference type="HAMAP-Rule" id="MF_00147"/>
    </source>
</evidence>
<evidence type="ECO:0007829" key="2">
    <source>
        <dbReference type="PDB" id="5UJW"/>
    </source>
</evidence>
<proteinExistence type="evidence at protein level"/>
<accession>Q5NII7</accession>
<organism>
    <name type="scientific">Francisella tularensis subsp. tularensis (strain SCHU S4 / Schu 4)</name>
    <dbReference type="NCBI Taxonomy" id="177416"/>
    <lineage>
        <taxon>Bacteria</taxon>
        <taxon>Pseudomonadati</taxon>
        <taxon>Pseudomonadota</taxon>
        <taxon>Gammaproteobacteria</taxon>
        <taxon>Thiotrichales</taxon>
        <taxon>Francisellaceae</taxon>
        <taxon>Francisella</taxon>
    </lineage>
</organism>
<reference key="1">
    <citation type="journal article" date="2005" name="Nat. Genet.">
        <title>The complete genome sequence of Francisella tularensis, the causative agent of tularemia.</title>
        <authorList>
            <person name="Larsson P."/>
            <person name="Oyston P.C.F."/>
            <person name="Chain P."/>
            <person name="Chu M.C."/>
            <person name="Duffield M."/>
            <person name="Fuxelius H.-H."/>
            <person name="Garcia E."/>
            <person name="Haelltorp G."/>
            <person name="Johansson D."/>
            <person name="Isherwood K.E."/>
            <person name="Karp P.D."/>
            <person name="Larsson E."/>
            <person name="Liu Y."/>
            <person name="Michell S."/>
            <person name="Prior J."/>
            <person name="Prior R."/>
            <person name="Malfatti S."/>
            <person name="Sjoestedt A."/>
            <person name="Svensson K."/>
            <person name="Thompson N."/>
            <person name="Vergez L."/>
            <person name="Wagg J.K."/>
            <person name="Wren B.W."/>
            <person name="Lindler L.E."/>
            <person name="Andersson S.G.E."/>
            <person name="Forsman M."/>
            <person name="Titball R.W."/>
        </authorList>
    </citation>
    <scope>NUCLEOTIDE SEQUENCE [LARGE SCALE GENOMIC DNA]</scope>
    <source>
        <strain>SCHU S4 / Schu 4</strain>
    </source>
</reference>
<name>TPIS_FRATT</name>
<dbReference type="EC" id="5.3.1.1" evidence="1"/>
<dbReference type="EMBL" id="AJ749949">
    <property type="protein sequence ID" value="CAG44713.1"/>
    <property type="molecule type" value="Genomic_DNA"/>
</dbReference>
<dbReference type="RefSeq" id="WP_003019651.1">
    <property type="nucleotide sequence ID" value="NZ_CP010290.1"/>
</dbReference>
<dbReference type="RefSeq" id="YP_169155.1">
    <property type="nucleotide sequence ID" value="NC_006570.2"/>
</dbReference>
<dbReference type="PDB" id="5UJW">
    <property type="method" value="X-ray"/>
    <property type="resolution" value="2.65 A"/>
    <property type="chains" value="A/B/C/D/E/F=1-253"/>
</dbReference>
<dbReference type="PDBsum" id="5UJW"/>
<dbReference type="SMR" id="Q5NII7"/>
<dbReference type="STRING" id="177416.FTT_0080"/>
<dbReference type="DNASU" id="3191461"/>
<dbReference type="EnsemblBacteria" id="CAG44713">
    <property type="protein sequence ID" value="CAG44713"/>
    <property type="gene ID" value="FTT_0080"/>
</dbReference>
<dbReference type="GeneID" id="75264638"/>
<dbReference type="KEGG" id="ftu:FTT_0080"/>
<dbReference type="eggNOG" id="COG0149">
    <property type="taxonomic scope" value="Bacteria"/>
</dbReference>
<dbReference type="OrthoDB" id="9809429at2"/>
<dbReference type="UniPathway" id="UPA00109">
    <property type="reaction ID" value="UER00189"/>
</dbReference>
<dbReference type="UniPathway" id="UPA00138"/>
<dbReference type="Proteomes" id="UP000001174">
    <property type="component" value="Chromosome"/>
</dbReference>
<dbReference type="GO" id="GO:0005829">
    <property type="term" value="C:cytosol"/>
    <property type="evidence" value="ECO:0007669"/>
    <property type="project" value="TreeGrafter"/>
</dbReference>
<dbReference type="GO" id="GO:0004807">
    <property type="term" value="F:triose-phosphate isomerase activity"/>
    <property type="evidence" value="ECO:0007669"/>
    <property type="project" value="UniProtKB-UniRule"/>
</dbReference>
<dbReference type="GO" id="GO:0006094">
    <property type="term" value="P:gluconeogenesis"/>
    <property type="evidence" value="ECO:0007669"/>
    <property type="project" value="UniProtKB-UniRule"/>
</dbReference>
<dbReference type="GO" id="GO:0046166">
    <property type="term" value="P:glyceraldehyde-3-phosphate biosynthetic process"/>
    <property type="evidence" value="ECO:0007669"/>
    <property type="project" value="TreeGrafter"/>
</dbReference>
<dbReference type="GO" id="GO:0019563">
    <property type="term" value="P:glycerol catabolic process"/>
    <property type="evidence" value="ECO:0007669"/>
    <property type="project" value="TreeGrafter"/>
</dbReference>
<dbReference type="GO" id="GO:0006096">
    <property type="term" value="P:glycolytic process"/>
    <property type="evidence" value="ECO:0007669"/>
    <property type="project" value="UniProtKB-UniRule"/>
</dbReference>
<dbReference type="CDD" id="cd00311">
    <property type="entry name" value="TIM"/>
    <property type="match status" value="1"/>
</dbReference>
<dbReference type="FunFam" id="3.20.20.70:FF:000016">
    <property type="entry name" value="Triosephosphate isomerase"/>
    <property type="match status" value="1"/>
</dbReference>
<dbReference type="Gene3D" id="3.20.20.70">
    <property type="entry name" value="Aldolase class I"/>
    <property type="match status" value="1"/>
</dbReference>
<dbReference type="HAMAP" id="MF_00147_B">
    <property type="entry name" value="TIM_B"/>
    <property type="match status" value="1"/>
</dbReference>
<dbReference type="InterPro" id="IPR013785">
    <property type="entry name" value="Aldolase_TIM"/>
</dbReference>
<dbReference type="InterPro" id="IPR035990">
    <property type="entry name" value="TIM_sf"/>
</dbReference>
<dbReference type="InterPro" id="IPR022896">
    <property type="entry name" value="TrioseP_Isoase_bac/euk"/>
</dbReference>
<dbReference type="InterPro" id="IPR000652">
    <property type="entry name" value="Triosephosphate_isomerase"/>
</dbReference>
<dbReference type="InterPro" id="IPR020861">
    <property type="entry name" value="Triosephosphate_isomerase_AS"/>
</dbReference>
<dbReference type="NCBIfam" id="TIGR00419">
    <property type="entry name" value="tim"/>
    <property type="match status" value="1"/>
</dbReference>
<dbReference type="PANTHER" id="PTHR21139">
    <property type="entry name" value="TRIOSEPHOSPHATE ISOMERASE"/>
    <property type="match status" value="1"/>
</dbReference>
<dbReference type="PANTHER" id="PTHR21139:SF42">
    <property type="entry name" value="TRIOSEPHOSPHATE ISOMERASE"/>
    <property type="match status" value="1"/>
</dbReference>
<dbReference type="Pfam" id="PF00121">
    <property type="entry name" value="TIM"/>
    <property type="match status" value="1"/>
</dbReference>
<dbReference type="SUPFAM" id="SSF51351">
    <property type="entry name" value="Triosephosphate isomerase (TIM)"/>
    <property type="match status" value="1"/>
</dbReference>
<dbReference type="PROSITE" id="PS00171">
    <property type="entry name" value="TIM_1"/>
    <property type="match status" value="1"/>
</dbReference>
<dbReference type="PROSITE" id="PS51440">
    <property type="entry name" value="TIM_2"/>
    <property type="match status" value="1"/>
</dbReference>
<gene>
    <name evidence="1" type="primary">tpiA</name>
    <name type="ordered locus">FTT_0080</name>
</gene>